<proteinExistence type="inferred from homology"/>
<protein>
    <recommendedName>
        <fullName>Ferredoxin-1</fullName>
    </recommendedName>
    <alternativeName>
        <fullName>Ferredoxin I</fullName>
    </alternativeName>
</protein>
<sequence length="97" mass="10389">MATYKVTLITPDGEVSYDAPDDEYILDSAGDAGYDLPASCRAGACSTCAGKIVSGTVDQSEQSFLDDDQIEAGYVLTCIAYPQSDVTIETNKEEELY</sequence>
<feature type="initiator methionine" description="Removed" evidence="1">
    <location>
        <position position="1"/>
    </location>
</feature>
<feature type="chain" id="PRO_0000189376" description="Ferredoxin-1">
    <location>
        <begin position="2"/>
        <end position="97"/>
    </location>
</feature>
<feature type="domain" description="2Fe-2S ferredoxin-type" evidence="2">
    <location>
        <begin position="4"/>
        <end position="94"/>
    </location>
</feature>
<feature type="binding site" evidence="2">
    <location>
        <position position="40"/>
    </location>
    <ligand>
        <name>[2Fe-2S] cluster</name>
        <dbReference type="ChEBI" id="CHEBI:190135"/>
    </ligand>
</feature>
<feature type="binding site" evidence="2">
    <location>
        <position position="45"/>
    </location>
    <ligand>
        <name>[2Fe-2S] cluster</name>
        <dbReference type="ChEBI" id="CHEBI:190135"/>
    </ligand>
</feature>
<feature type="binding site" evidence="2">
    <location>
        <position position="48"/>
    </location>
    <ligand>
        <name>[2Fe-2S] cluster</name>
        <dbReference type="ChEBI" id="CHEBI:190135"/>
    </ligand>
</feature>
<feature type="binding site" evidence="2">
    <location>
        <position position="78"/>
    </location>
    <ligand>
        <name>[2Fe-2S] cluster</name>
        <dbReference type="ChEBI" id="CHEBI:190135"/>
    </ligand>
</feature>
<reference key="1">
    <citation type="journal article" date="1992" name="J. Gen. Microbiol.">
        <title>An iron stress operon involved in photosynthetic electron transport in the marine cyanobacterium Synechococcus sp. PCC 7002.</title>
        <authorList>
            <person name="Leonhardt K.G."/>
            <person name="Straus N.A."/>
        </authorList>
    </citation>
    <scope>NUCLEOTIDE SEQUENCE [GENOMIC DNA]</scope>
</reference>
<reference key="2">
    <citation type="submission" date="2008-02" db="EMBL/GenBank/DDBJ databases">
        <title>Complete sequence of Synechococcus sp. PCC 7002.</title>
        <authorList>
            <person name="Li T."/>
            <person name="Zhao J."/>
            <person name="Zhao C."/>
            <person name="Liu Z."/>
            <person name="Zhao F."/>
            <person name="Marquardt J."/>
            <person name="Nomura C.T."/>
            <person name="Persson S."/>
            <person name="Detter J.C."/>
            <person name="Richardson P.M."/>
            <person name="Lanz C."/>
            <person name="Schuster S.C."/>
            <person name="Wang J."/>
            <person name="Li S."/>
            <person name="Huang X."/>
            <person name="Cai T."/>
            <person name="Yu Z."/>
            <person name="Luo J."/>
            <person name="Zhao J."/>
            <person name="Bryant D.A."/>
        </authorList>
    </citation>
    <scope>NUCLEOTIDE SEQUENCE [LARGE SCALE GENOMIC DNA]</scope>
    <source>
        <strain>ATCC 27264 / PCC 7002 / PR-6</strain>
    </source>
</reference>
<accession>P31965</accession>
<accession>B1XJL8</accession>
<evidence type="ECO:0000250" key="1"/>
<evidence type="ECO:0000255" key="2">
    <source>
        <dbReference type="PROSITE-ProRule" id="PRU00465"/>
    </source>
</evidence>
<evidence type="ECO:0000305" key="3"/>
<comment type="function">
    <text>Ferredoxins are iron-sulfur proteins that transfer electrons in a wide variety of metabolic reactions.</text>
</comment>
<comment type="cofactor">
    <cofactor>
        <name>[2Fe-2S] cluster</name>
        <dbReference type="ChEBI" id="CHEBI:190135"/>
    </cofactor>
    <text>Binds 1 [2Fe-2S] cluster.</text>
</comment>
<comment type="subunit">
    <text evidence="1">Forms a complex with heterodimeric ferredoxin-thioredoxin reductase (FTR) and thioredoxin.</text>
</comment>
<comment type="similarity">
    <text evidence="3">Belongs to the 2Fe2S plant-type ferredoxin family.</text>
</comment>
<name>FER1_PICP2</name>
<keyword id="KW-0001">2Fe-2S</keyword>
<keyword id="KW-0249">Electron transport</keyword>
<keyword id="KW-0408">Iron</keyword>
<keyword id="KW-0411">Iron-sulfur</keyword>
<keyword id="KW-0479">Metal-binding</keyword>
<keyword id="KW-1185">Reference proteome</keyword>
<keyword id="KW-0813">Transport</keyword>
<gene>
    <name type="primary">petF</name>
    <name type="ordered locus">SYNPCC7002_A2326</name>
</gene>
<dbReference type="EMBL" id="M88251">
    <property type="protein sequence ID" value="AAA27329.1"/>
    <property type="molecule type" value="Genomic_DNA"/>
</dbReference>
<dbReference type="EMBL" id="CP000951">
    <property type="protein sequence ID" value="ACB00304.1"/>
    <property type="molecule type" value="Genomic_DNA"/>
</dbReference>
<dbReference type="SMR" id="P31965"/>
<dbReference type="STRING" id="32049.SYNPCC7002_A2326"/>
<dbReference type="KEGG" id="syp:SYNPCC7002_A2326"/>
<dbReference type="eggNOG" id="COG0633">
    <property type="taxonomic scope" value="Bacteria"/>
</dbReference>
<dbReference type="HOGENOM" id="CLU_082632_7_3_3"/>
<dbReference type="Proteomes" id="UP000001688">
    <property type="component" value="Chromosome"/>
</dbReference>
<dbReference type="GO" id="GO:0051537">
    <property type="term" value="F:2 iron, 2 sulfur cluster binding"/>
    <property type="evidence" value="ECO:0007669"/>
    <property type="project" value="UniProtKB-KW"/>
</dbReference>
<dbReference type="GO" id="GO:0009055">
    <property type="term" value="F:electron transfer activity"/>
    <property type="evidence" value="ECO:0007669"/>
    <property type="project" value="InterPro"/>
</dbReference>
<dbReference type="GO" id="GO:0046872">
    <property type="term" value="F:metal ion binding"/>
    <property type="evidence" value="ECO:0007669"/>
    <property type="project" value="UniProtKB-KW"/>
</dbReference>
<dbReference type="GO" id="GO:0022900">
    <property type="term" value="P:electron transport chain"/>
    <property type="evidence" value="ECO:0007669"/>
    <property type="project" value="InterPro"/>
</dbReference>
<dbReference type="CDD" id="cd00207">
    <property type="entry name" value="fer2"/>
    <property type="match status" value="1"/>
</dbReference>
<dbReference type="FunFam" id="3.10.20.30:FF:000014">
    <property type="entry name" value="Ferredoxin"/>
    <property type="match status" value="1"/>
</dbReference>
<dbReference type="Gene3D" id="3.10.20.30">
    <property type="match status" value="1"/>
</dbReference>
<dbReference type="InterPro" id="IPR036010">
    <property type="entry name" value="2Fe-2S_ferredoxin-like_sf"/>
</dbReference>
<dbReference type="InterPro" id="IPR001041">
    <property type="entry name" value="2Fe-2S_ferredoxin-type"/>
</dbReference>
<dbReference type="InterPro" id="IPR006058">
    <property type="entry name" value="2Fe2S_fd_BS"/>
</dbReference>
<dbReference type="InterPro" id="IPR012675">
    <property type="entry name" value="Beta-grasp_dom_sf"/>
</dbReference>
<dbReference type="InterPro" id="IPR010241">
    <property type="entry name" value="Fd_pln"/>
</dbReference>
<dbReference type="NCBIfam" id="TIGR02008">
    <property type="entry name" value="fdx_plant"/>
    <property type="match status" value="1"/>
</dbReference>
<dbReference type="PANTHER" id="PTHR43112">
    <property type="entry name" value="FERREDOXIN"/>
    <property type="match status" value="1"/>
</dbReference>
<dbReference type="PANTHER" id="PTHR43112:SF3">
    <property type="entry name" value="FERREDOXIN-2, CHLOROPLASTIC"/>
    <property type="match status" value="1"/>
</dbReference>
<dbReference type="Pfam" id="PF00111">
    <property type="entry name" value="Fer2"/>
    <property type="match status" value="1"/>
</dbReference>
<dbReference type="SUPFAM" id="SSF54292">
    <property type="entry name" value="2Fe-2S ferredoxin-like"/>
    <property type="match status" value="1"/>
</dbReference>
<dbReference type="PROSITE" id="PS00197">
    <property type="entry name" value="2FE2S_FER_1"/>
    <property type="match status" value="1"/>
</dbReference>
<dbReference type="PROSITE" id="PS51085">
    <property type="entry name" value="2FE2S_FER_2"/>
    <property type="match status" value="1"/>
</dbReference>
<organism>
    <name type="scientific">Picosynechococcus sp. (strain ATCC 27264 / PCC 7002 / PR-6)</name>
    <name type="common">Agmenellum quadruplicatum</name>
    <dbReference type="NCBI Taxonomy" id="32049"/>
    <lineage>
        <taxon>Bacteria</taxon>
        <taxon>Bacillati</taxon>
        <taxon>Cyanobacteriota</taxon>
        <taxon>Cyanophyceae</taxon>
        <taxon>Oscillatoriophycideae</taxon>
        <taxon>Chroococcales</taxon>
        <taxon>Geminocystaceae</taxon>
        <taxon>Picosynechococcus</taxon>
    </lineage>
</organism>